<reference key="1">
    <citation type="journal article" date="2011" name="J. Bacteriol.">
        <title>Complete genome sequence and updated annotation of Desulfovibrio alaskensis G20.</title>
        <authorList>
            <person name="Hauser L.J."/>
            <person name="Land M.L."/>
            <person name="Brown S.D."/>
            <person name="Larimer F."/>
            <person name="Keller K.L."/>
            <person name="Rapp-Giles B.J."/>
            <person name="Price M.N."/>
            <person name="Lin M."/>
            <person name="Bruce D.C."/>
            <person name="Detter J.C."/>
            <person name="Tapia R."/>
            <person name="Han C.S."/>
            <person name="Goodwin L.A."/>
            <person name="Cheng J.F."/>
            <person name="Pitluck S."/>
            <person name="Copeland A."/>
            <person name="Lucas S."/>
            <person name="Nolan M."/>
            <person name="Lapidus A.L."/>
            <person name="Palumbo A.V."/>
            <person name="Wall J.D."/>
        </authorList>
    </citation>
    <scope>NUCLEOTIDE SEQUENCE [LARGE SCALE GENOMIC DNA]</scope>
    <source>
        <strain>ATCC BAA-1058 / DSM 17464 / G20</strain>
    </source>
</reference>
<accession>Q30X18</accession>
<dbReference type="EMBL" id="CP000112">
    <property type="protein sequence ID" value="ABB39778.1"/>
    <property type="molecule type" value="Genomic_DNA"/>
</dbReference>
<dbReference type="RefSeq" id="WP_011368753.1">
    <property type="nucleotide sequence ID" value="NC_007519.1"/>
</dbReference>
<dbReference type="SMR" id="Q30X18"/>
<dbReference type="STRING" id="207559.Dde_2984"/>
<dbReference type="KEGG" id="dde:Dde_2984"/>
<dbReference type="eggNOG" id="COG0216">
    <property type="taxonomic scope" value="Bacteria"/>
</dbReference>
<dbReference type="HOGENOM" id="CLU_036856_0_1_7"/>
<dbReference type="Proteomes" id="UP000002710">
    <property type="component" value="Chromosome"/>
</dbReference>
<dbReference type="GO" id="GO:0005737">
    <property type="term" value="C:cytoplasm"/>
    <property type="evidence" value="ECO:0007669"/>
    <property type="project" value="UniProtKB-SubCell"/>
</dbReference>
<dbReference type="GO" id="GO:0016149">
    <property type="term" value="F:translation release factor activity, codon specific"/>
    <property type="evidence" value="ECO:0007669"/>
    <property type="project" value="UniProtKB-UniRule"/>
</dbReference>
<dbReference type="FunFam" id="3.30.160.20:FF:000004">
    <property type="entry name" value="Peptide chain release factor 1"/>
    <property type="match status" value="1"/>
</dbReference>
<dbReference type="FunFam" id="3.30.70.1660:FF:000002">
    <property type="entry name" value="Peptide chain release factor 1"/>
    <property type="match status" value="1"/>
</dbReference>
<dbReference type="FunFam" id="3.30.70.1660:FF:000004">
    <property type="entry name" value="Peptide chain release factor 1"/>
    <property type="match status" value="1"/>
</dbReference>
<dbReference type="Gene3D" id="3.30.160.20">
    <property type="match status" value="1"/>
</dbReference>
<dbReference type="Gene3D" id="3.30.70.1660">
    <property type="match status" value="1"/>
</dbReference>
<dbReference type="Gene3D" id="6.10.140.1950">
    <property type="match status" value="1"/>
</dbReference>
<dbReference type="HAMAP" id="MF_00093">
    <property type="entry name" value="Rel_fac_1"/>
    <property type="match status" value="1"/>
</dbReference>
<dbReference type="InterPro" id="IPR005139">
    <property type="entry name" value="PCRF"/>
</dbReference>
<dbReference type="InterPro" id="IPR000352">
    <property type="entry name" value="Pep_chain_release_fac_I"/>
</dbReference>
<dbReference type="InterPro" id="IPR045853">
    <property type="entry name" value="Pep_chain_release_fac_I_sf"/>
</dbReference>
<dbReference type="InterPro" id="IPR050057">
    <property type="entry name" value="Prokaryotic/Mito_RF"/>
</dbReference>
<dbReference type="InterPro" id="IPR004373">
    <property type="entry name" value="RF-1"/>
</dbReference>
<dbReference type="NCBIfam" id="TIGR00019">
    <property type="entry name" value="prfA"/>
    <property type="match status" value="1"/>
</dbReference>
<dbReference type="NCBIfam" id="NF001859">
    <property type="entry name" value="PRK00591.1"/>
    <property type="match status" value="1"/>
</dbReference>
<dbReference type="PANTHER" id="PTHR43804">
    <property type="entry name" value="LD18447P"/>
    <property type="match status" value="1"/>
</dbReference>
<dbReference type="PANTHER" id="PTHR43804:SF7">
    <property type="entry name" value="LD18447P"/>
    <property type="match status" value="1"/>
</dbReference>
<dbReference type="Pfam" id="PF03462">
    <property type="entry name" value="PCRF"/>
    <property type="match status" value="1"/>
</dbReference>
<dbReference type="Pfam" id="PF00472">
    <property type="entry name" value="RF-1"/>
    <property type="match status" value="1"/>
</dbReference>
<dbReference type="SMART" id="SM00937">
    <property type="entry name" value="PCRF"/>
    <property type="match status" value="1"/>
</dbReference>
<dbReference type="SUPFAM" id="SSF75620">
    <property type="entry name" value="Release factor"/>
    <property type="match status" value="1"/>
</dbReference>
<dbReference type="PROSITE" id="PS00745">
    <property type="entry name" value="RF_PROK_I"/>
    <property type="match status" value="1"/>
</dbReference>
<name>RF1_OLEA2</name>
<evidence type="ECO:0000255" key="1">
    <source>
        <dbReference type="HAMAP-Rule" id="MF_00093"/>
    </source>
</evidence>
<protein>
    <recommendedName>
        <fullName evidence="1">Peptide chain release factor 1</fullName>
        <shortName evidence="1">RF-1</shortName>
    </recommendedName>
</protein>
<comment type="function">
    <text evidence="1">Peptide chain release factor 1 directs the termination of translation in response to the peptide chain termination codons UAG and UAA.</text>
</comment>
<comment type="subcellular location">
    <subcellularLocation>
        <location evidence="1">Cytoplasm</location>
    </subcellularLocation>
</comment>
<comment type="PTM">
    <text evidence="1">Methylated by PrmC. Methylation increases the termination efficiency of RF1.</text>
</comment>
<comment type="similarity">
    <text evidence="1">Belongs to the prokaryotic/mitochondrial release factor family.</text>
</comment>
<keyword id="KW-0963">Cytoplasm</keyword>
<keyword id="KW-0488">Methylation</keyword>
<keyword id="KW-0648">Protein biosynthesis</keyword>
<keyword id="KW-1185">Reference proteome</keyword>
<proteinExistence type="inferred from homology"/>
<organism>
    <name type="scientific">Oleidesulfovibrio alaskensis (strain ATCC BAA-1058 / DSM 17464 / G20)</name>
    <name type="common">Desulfovibrio alaskensis</name>
    <dbReference type="NCBI Taxonomy" id="207559"/>
    <lineage>
        <taxon>Bacteria</taxon>
        <taxon>Pseudomonadati</taxon>
        <taxon>Thermodesulfobacteriota</taxon>
        <taxon>Desulfovibrionia</taxon>
        <taxon>Desulfovibrionales</taxon>
        <taxon>Desulfovibrionaceae</taxon>
        <taxon>Oleidesulfovibrio</taxon>
    </lineage>
</organism>
<feature type="chain" id="PRO_0000263268" description="Peptide chain release factor 1">
    <location>
        <begin position="1"/>
        <end position="357"/>
    </location>
</feature>
<feature type="modified residue" description="N5-methylglutamine" evidence="1">
    <location>
        <position position="232"/>
    </location>
</feature>
<gene>
    <name evidence="1" type="primary">prfA</name>
    <name type="ordered locus">Dde_2984</name>
</gene>
<sequence>MFAKLEHLERQFEDLEQQLSSPEVFGDQERYRKLTKAHSDLKEIVEVFRVYRQLNEELAGNKEMLRDSDPEIQAMAREEIDAIEKRLPEMEHELKLLLLPKDPLDEKNVVLEIRAGTGGEEAALFAADLFRMYLRYAEDMGWRVEVLSSSETDSGGFKEIIGLISGDKVYSRMKFESGTHRVQRVPATETQGRIHTSAATVAVMPEADEVELDMKPEDLRFDVYRSSGPGGQSVNTTDSAVRVTHIPTGITVACQDEKSQHKNKAKGLKILASRLLQAQEDKRHEELAEQRRSLVGTGDRSGRIRTYNFPQGRITDHRINLTLYKLDAFMEGQIGDMLDALITHAQTEALKAQANVH</sequence>